<comment type="function">
    <text evidence="1">Protein S19 forms a complex with S13 that binds strongly to the 16S ribosomal RNA.</text>
</comment>
<comment type="similarity">
    <text evidence="1">Belongs to the universal ribosomal protein uS19 family.</text>
</comment>
<feature type="chain" id="PRO_1000146401" description="Small ribosomal subunit protein uS19">
    <location>
        <begin position="1"/>
        <end position="92"/>
    </location>
</feature>
<accession>B8ELF9</accession>
<gene>
    <name evidence="1" type="primary">rpsS</name>
    <name type="ordered locus">Msil_0576</name>
</gene>
<protein>
    <recommendedName>
        <fullName evidence="1">Small ribosomal subunit protein uS19</fullName>
    </recommendedName>
    <alternativeName>
        <fullName evidence="2">30S ribosomal protein S19</fullName>
    </alternativeName>
</protein>
<proteinExistence type="inferred from homology"/>
<name>RS19_METSB</name>
<evidence type="ECO:0000255" key="1">
    <source>
        <dbReference type="HAMAP-Rule" id="MF_00531"/>
    </source>
</evidence>
<evidence type="ECO:0000305" key="2"/>
<keyword id="KW-1185">Reference proteome</keyword>
<keyword id="KW-0687">Ribonucleoprotein</keyword>
<keyword id="KW-0689">Ribosomal protein</keyword>
<keyword id="KW-0694">RNA-binding</keyword>
<keyword id="KW-0699">rRNA-binding</keyword>
<organism>
    <name type="scientific">Methylocella silvestris (strain DSM 15510 / CIP 108128 / LMG 27833 / NCIMB 13906 / BL2)</name>
    <dbReference type="NCBI Taxonomy" id="395965"/>
    <lineage>
        <taxon>Bacteria</taxon>
        <taxon>Pseudomonadati</taxon>
        <taxon>Pseudomonadota</taxon>
        <taxon>Alphaproteobacteria</taxon>
        <taxon>Hyphomicrobiales</taxon>
        <taxon>Beijerinckiaceae</taxon>
        <taxon>Methylocella</taxon>
    </lineage>
</organism>
<dbReference type="EMBL" id="CP001280">
    <property type="protein sequence ID" value="ACK49548.1"/>
    <property type="molecule type" value="Genomic_DNA"/>
</dbReference>
<dbReference type="RefSeq" id="WP_012589618.1">
    <property type="nucleotide sequence ID" value="NC_011666.1"/>
</dbReference>
<dbReference type="SMR" id="B8ELF9"/>
<dbReference type="STRING" id="395965.Msil_0576"/>
<dbReference type="KEGG" id="msl:Msil_0576"/>
<dbReference type="eggNOG" id="COG0185">
    <property type="taxonomic scope" value="Bacteria"/>
</dbReference>
<dbReference type="HOGENOM" id="CLU_144911_0_1_5"/>
<dbReference type="OrthoDB" id="9797833at2"/>
<dbReference type="Proteomes" id="UP000002257">
    <property type="component" value="Chromosome"/>
</dbReference>
<dbReference type="GO" id="GO:0005737">
    <property type="term" value="C:cytoplasm"/>
    <property type="evidence" value="ECO:0007669"/>
    <property type="project" value="UniProtKB-ARBA"/>
</dbReference>
<dbReference type="GO" id="GO:0015935">
    <property type="term" value="C:small ribosomal subunit"/>
    <property type="evidence" value="ECO:0007669"/>
    <property type="project" value="InterPro"/>
</dbReference>
<dbReference type="GO" id="GO:0019843">
    <property type="term" value="F:rRNA binding"/>
    <property type="evidence" value="ECO:0007669"/>
    <property type="project" value="UniProtKB-UniRule"/>
</dbReference>
<dbReference type="GO" id="GO:0003735">
    <property type="term" value="F:structural constituent of ribosome"/>
    <property type="evidence" value="ECO:0007669"/>
    <property type="project" value="InterPro"/>
</dbReference>
<dbReference type="GO" id="GO:0000028">
    <property type="term" value="P:ribosomal small subunit assembly"/>
    <property type="evidence" value="ECO:0007669"/>
    <property type="project" value="TreeGrafter"/>
</dbReference>
<dbReference type="GO" id="GO:0006412">
    <property type="term" value="P:translation"/>
    <property type="evidence" value="ECO:0007669"/>
    <property type="project" value="UniProtKB-UniRule"/>
</dbReference>
<dbReference type="FunFam" id="3.30.860.10:FF:000001">
    <property type="entry name" value="30S ribosomal protein S19"/>
    <property type="match status" value="1"/>
</dbReference>
<dbReference type="Gene3D" id="3.30.860.10">
    <property type="entry name" value="30s Ribosomal Protein S19, Chain A"/>
    <property type="match status" value="1"/>
</dbReference>
<dbReference type="HAMAP" id="MF_00531">
    <property type="entry name" value="Ribosomal_uS19"/>
    <property type="match status" value="1"/>
</dbReference>
<dbReference type="InterPro" id="IPR002222">
    <property type="entry name" value="Ribosomal_uS19"/>
</dbReference>
<dbReference type="InterPro" id="IPR005732">
    <property type="entry name" value="Ribosomal_uS19_bac-type"/>
</dbReference>
<dbReference type="InterPro" id="IPR020934">
    <property type="entry name" value="Ribosomal_uS19_CS"/>
</dbReference>
<dbReference type="InterPro" id="IPR023575">
    <property type="entry name" value="Ribosomal_uS19_SF"/>
</dbReference>
<dbReference type="NCBIfam" id="TIGR01050">
    <property type="entry name" value="rpsS_bact"/>
    <property type="match status" value="1"/>
</dbReference>
<dbReference type="PANTHER" id="PTHR11880">
    <property type="entry name" value="RIBOSOMAL PROTEIN S19P FAMILY MEMBER"/>
    <property type="match status" value="1"/>
</dbReference>
<dbReference type="PANTHER" id="PTHR11880:SF8">
    <property type="entry name" value="SMALL RIBOSOMAL SUBUNIT PROTEIN US19M"/>
    <property type="match status" value="1"/>
</dbReference>
<dbReference type="Pfam" id="PF00203">
    <property type="entry name" value="Ribosomal_S19"/>
    <property type="match status" value="1"/>
</dbReference>
<dbReference type="PIRSF" id="PIRSF002144">
    <property type="entry name" value="Ribosomal_S19"/>
    <property type="match status" value="1"/>
</dbReference>
<dbReference type="PRINTS" id="PR00975">
    <property type="entry name" value="RIBOSOMALS19"/>
</dbReference>
<dbReference type="SUPFAM" id="SSF54570">
    <property type="entry name" value="Ribosomal protein S19"/>
    <property type="match status" value="1"/>
</dbReference>
<dbReference type="PROSITE" id="PS00323">
    <property type="entry name" value="RIBOSOMAL_S19"/>
    <property type="match status" value="1"/>
</dbReference>
<reference key="1">
    <citation type="journal article" date="2010" name="J. Bacteriol.">
        <title>Complete genome sequence of the aerobic facultative methanotroph Methylocella silvestris BL2.</title>
        <authorList>
            <person name="Chen Y."/>
            <person name="Crombie A."/>
            <person name="Rahman M.T."/>
            <person name="Dedysh S.N."/>
            <person name="Liesack W."/>
            <person name="Stott M.B."/>
            <person name="Alam M."/>
            <person name="Theisen A.R."/>
            <person name="Murrell J.C."/>
            <person name="Dunfield P.F."/>
        </authorList>
    </citation>
    <scope>NUCLEOTIDE SEQUENCE [LARGE SCALE GENOMIC DNA]</scope>
    <source>
        <strain>DSM 15510 / CIP 108128 / LMG 27833 / NCIMB 13906 / BL2</strain>
    </source>
</reference>
<sequence>MARSIWKGPFVDGYLLKKADASRATGRSEVIKIWSRRSTILPQFVGLTFGVYNGHKHVPVNVTEEMIGHKFGEFSPTRTFHGHSADKKARRG</sequence>